<comment type="subunit">
    <text evidence="1">Strongly interacts with EsxL to form a heterodimeric complex under reducing conditions.</text>
</comment>
<comment type="subcellular location">
    <subcellularLocation>
        <location evidence="1">Secreted</location>
    </subcellularLocation>
    <text evidence="1">Probably secreted via the ESX-5 / type VII secretion system (T7SS).</text>
</comment>
<comment type="similarity">
    <text evidence="2">Belongs to the WXG100 family. CFP-10 subfamily.</text>
</comment>
<evidence type="ECO:0000250" key="1">
    <source>
        <dbReference type="UniProtKB" id="P9WNJ7"/>
    </source>
</evidence>
<evidence type="ECO:0000305" key="2"/>
<feature type="chain" id="PRO_0000436930" description="ESAT-6-like protein EsxK">
    <location>
        <begin position="1"/>
        <end position="98"/>
    </location>
</feature>
<accession>P0DOB1</accession>
<accession>A0A1R3XXM2</accession>
<accession>P59803</accession>
<accession>X2BGJ8</accession>
<sequence>MASRFMTDPHAMRDMAGRFEVHAQTVEDEARRMWASAQNISGAGWSGMAEATSLDTMTQMNQAFRNIVNMLHGVRDGLVRDANNYEQQEQASQQILSS</sequence>
<organism>
    <name type="scientific">Mycobacterium bovis (strain ATCC BAA-935 / AF2122/97)</name>
    <dbReference type="NCBI Taxonomy" id="233413"/>
    <lineage>
        <taxon>Bacteria</taxon>
        <taxon>Bacillati</taxon>
        <taxon>Actinomycetota</taxon>
        <taxon>Actinomycetes</taxon>
        <taxon>Mycobacteriales</taxon>
        <taxon>Mycobacteriaceae</taxon>
        <taxon>Mycobacterium</taxon>
        <taxon>Mycobacterium tuberculosis complex</taxon>
    </lineage>
</organism>
<dbReference type="EMBL" id="LT708304">
    <property type="protein sequence ID" value="SIT99830.1"/>
    <property type="molecule type" value="Genomic_DNA"/>
</dbReference>
<dbReference type="RefSeq" id="NP_854723.1">
    <property type="nucleotide sequence ID" value="NC_002945.3"/>
</dbReference>
<dbReference type="RefSeq" id="NP_854883.1">
    <property type="nucleotide sequence ID" value="NC_002945.3"/>
</dbReference>
<dbReference type="SMR" id="P0DOB1"/>
<dbReference type="KEGG" id="mbo:BQ2027_MB1229"/>
<dbReference type="PATRIC" id="fig|233413.5.peg.1160"/>
<dbReference type="Proteomes" id="UP000001419">
    <property type="component" value="Chromosome"/>
</dbReference>
<dbReference type="GO" id="GO:0005576">
    <property type="term" value="C:extracellular region"/>
    <property type="evidence" value="ECO:0007669"/>
    <property type="project" value="UniProtKB-SubCell"/>
</dbReference>
<dbReference type="FunFam" id="1.10.287.1060:FF:000006">
    <property type="entry name" value="ESAT-6-like protein"/>
    <property type="match status" value="1"/>
</dbReference>
<dbReference type="Gene3D" id="1.10.287.1060">
    <property type="entry name" value="ESAT-6-like"/>
    <property type="match status" value="1"/>
</dbReference>
<dbReference type="InterPro" id="IPR036689">
    <property type="entry name" value="ESAT-6-like_sf"/>
</dbReference>
<dbReference type="InterPro" id="IPR010310">
    <property type="entry name" value="T7SS_ESAT-6-like"/>
</dbReference>
<dbReference type="NCBIfam" id="TIGR03930">
    <property type="entry name" value="WXG100_ESAT6"/>
    <property type="match status" value="1"/>
</dbReference>
<dbReference type="Pfam" id="PF06013">
    <property type="entry name" value="WXG100"/>
    <property type="match status" value="1"/>
</dbReference>
<dbReference type="SUPFAM" id="SSF140453">
    <property type="entry name" value="EsxAB dimer-like"/>
    <property type="match status" value="1"/>
</dbReference>
<proteinExistence type="inferred from homology"/>
<name>ESXK_MYCBO</name>
<protein>
    <recommendedName>
        <fullName evidence="1">ESAT-6-like protein EsxK</fullName>
    </recommendedName>
</protein>
<reference key="1">
    <citation type="journal article" date="2003" name="Proc. Natl. Acad. Sci. U.S.A.">
        <title>The complete genome sequence of Mycobacterium bovis.</title>
        <authorList>
            <person name="Garnier T."/>
            <person name="Eiglmeier K."/>
            <person name="Camus J.-C."/>
            <person name="Medina N."/>
            <person name="Mansoor H."/>
            <person name="Pryor M."/>
            <person name="Duthoy S."/>
            <person name="Grondin S."/>
            <person name="Lacroix C."/>
            <person name="Monsempe C."/>
            <person name="Simon S."/>
            <person name="Harris B."/>
            <person name="Atkin R."/>
            <person name="Doggett J."/>
            <person name="Mayes R."/>
            <person name="Keating L."/>
            <person name="Wheeler P.R."/>
            <person name="Parkhill J."/>
            <person name="Barrell B.G."/>
            <person name="Cole S.T."/>
            <person name="Gordon S.V."/>
            <person name="Hewinson R.G."/>
        </authorList>
    </citation>
    <scope>NUCLEOTIDE SEQUENCE [LARGE SCALE GENOMIC DNA]</scope>
    <source>
        <strain>ATCC BAA-935 / AF2122/97</strain>
    </source>
</reference>
<reference key="2">
    <citation type="journal article" date="2017" name="Genome Announc.">
        <title>Updated reference genome sequence and annotation of Mycobacterium bovis AF2122/97.</title>
        <authorList>
            <person name="Malone K.M."/>
            <person name="Farrell D."/>
            <person name="Stuber T.P."/>
            <person name="Schubert O.T."/>
            <person name="Aebersold R."/>
            <person name="Robbe-Austerman S."/>
            <person name="Gordon S.V."/>
        </authorList>
    </citation>
    <scope>NUCLEOTIDE SEQUENCE [LARGE SCALE GENOMIC DNA]</scope>
    <scope>GENOME REANNOTATION</scope>
    <source>
        <strain>ATCC BAA-935 / AF2122/97</strain>
    </source>
</reference>
<keyword id="KW-1185">Reference proteome</keyword>
<keyword id="KW-0964">Secreted</keyword>
<gene>
    <name evidence="1" type="primary">esxK</name>
    <name type="ordered locus">BQ2027_MB1229</name>
</gene>